<accession>B2ULY3</accession>
<comment type="function">
    <text evidence="1">NDH-1 shuttles electrons from NADH, via FMN and iron-sulfur (Fe-S) centers, to quinones in the respiratory chain. The immediate electron acceptor for the enzyme in this species is believed to be ubiquinone. Couples the redox reaction to proton translocation (for every two electrons transferred, four hydrogen ions are translocated across the cytoplasmic membrane), and thus conserves the redox energy in a proton gradient.</text>
</comment>
<comment type="catalytic activity">
    <reaction evidence="1">
        <text>a quinone + NADH + 5 H(+)(in) = a quinol + NAD(+) + 4 H(+)(out)</text>
        <dbReference type="Rhea" id="RHEA:57888"/>
        <dbReference type="ChEBI" id="CHEBI:15378"/>
        <dbReference type="ChEBI" id="CHEBI:24646"/>
        <dbReference type="ChEBI" id="CHEBI:57540"/>
        <dbReference type="ChEBI" id="CHEBI:57945"/>
        <dbReference type="ChEBI" id="CHEBI:132124"/>
    </reaction>
</comment>
<comment type="subunit">
    <text evidence="1">NDH-1 is composed of 14 different subunits. Subunits NuoA, H, J, K, L, M, N constitute the membrane sector of the complex.</text>
</comment>
<comment type="subcellular location">
    <subcellularLocation>
        <location evidence="1">Cell inner membrane</location>
        <topology evidence="1">Multi-pass membrane protein</topology>
    </subcellularLocation>
</comment>
<comment type="similarity">
    <text evidence="1">Belongs to the complex I subunit 4L family.</text>
</comment>
<sequence>MIPLTHYLILSGVLFAIGLMGVIVRRDIIVIFMCLEMMLSAANLSLVAFSRAQGTMGLPNYDGQALSIFILTIAAAEVAIGLALIVSLYRARRTASTQDLNTLKD</sequence>
<feature type="chain" id="PRO_0000389923" description="NADH-quinone oxidoreductase subunit K">
    <location>
        <begin position="1"/>
        <end position="105"/>
    </location>
</feature>
<feature type="transmembrane region" description="Helical" evidence="1">
    <location>
        <begin position="4"/>
        <end position="24"/>
    </location>
</feature>
<feature type="transmembrane region" description="Helical" evidence="1">
    <location>
        <begin position="28"/>
        <end position="48"/>
    </location>
</feature>
<feature type="transmembrane region" description="Helical" evidence="1">
    <location>
        <begin position="66"/>
        <end position="86"/>
    </location>
</feature>
<gene>
    <name evidence="1" type="primary">nuoK</name>
    <name type="ordered locus">Amuc_1607</name>
</gene>
<protein>
    <recommendedName>
        <fullName evidence="1">NADH-quinone oxidoreductase subunit K</fullName>
        <ecNumber evidence="1">7.1.1.-</ecNumber>
    </recommendedName>
    <alternativeName>
        <fullName evidence="1">NADH dehydrogenase I subunit K</fullName>
    </alternativeName>
    <alternativeName>
        <fullName evidence="1">NDH-1 subunit K</fullName>
    </alternativeName>
</protein>
<proteinExistence type="inferred from homology"/>
<name>NUOK_AKKM8</name>
<keyword id="KW-0997">Cell inner membrane</keyword>
<keyword id="KW-1003">Cell membrane</keyword>
<keyword id="KW-0472">Membrane</keyword>
<keyword id="KW-0520">NAD</keyword>
<keyword id="KW-0874">Quinone</keyword>
<keyword id="KW-1185">Reference proteome</keyword>
<keyword id="KW-1278">Translocase</keyword>
<keyword id="KW-0812">Transmembrane</keyword>
<keyword id="KW-1133">Transmembrane helix</keyword>
<keyword id="KW-0813">Transport</keyword>
<keyword id="KW-0830">Ubiquinone</keyword>
<reference key="1">
    <citation type="journal article" date="2011" name="PLoS ONE">
        <title>The genome of Akkermansia muciniphila, a dedicated intestinal mucin degrader, and its use in exploring intestinal metagenomes.</title>
        <authorList>
            <person name="van Passel M.W."/>
            <person name="Kant R."/>
            <person name="Zoetendal E.G."/>
            <person name="Plugge C.M."/>
            <person name="Derrien M."/>
            <person name="Malfatti S.A."/>
            <person name="Chain P.S."/>
            <person name="Woyke T."/>
            <person name="Palva A."/>
            <person name="de Vos W.M."/>
            <person name="Smidt H."/>
        </authorList>
    </citation>
    <scope>NUCLEOTIDE SEQUENCE [LARGE SCALE GENOMIC DNA]</scope>
    <source>
        <strain>ATCC BAA-835 / DSM 22959 / JCM 33894 / BCRC 81048 / CCUG 64013 / CIP 107961 / Muc</strain>
    </source>
</reference>
<evidence type="ECO:0000255" key="1">
    <source>
        <dbReference type="HAMAP-Rule" id="MF_01456"/>
    </source>
</evidence>
<dbReference type="EC" id="7.1.1.-" evidence="1"/>
<dbReference type="EMBL" id="CP001071">
    <property type="protein sequence ID" value="ACD05427.1"/>
    <property type="molecule type" value="Genomic_DNA"/>
</dbReference>
<dbReference type="RefSeq" id="WP_012420642.1">
    <property type="nucleotide sequence ID" value="NZ_CP071807.1"/>
</dbReference>
<dbReference type="SMR" id="B2ULY3"/>
<dbReference type="STRING" id="349741.Amuc_1607"/>
<dbReference type="PaxDb" id="349741-Amuc_1607"/>
<dbReference type="GeneID" id="86961221"/>
<dbReference type="KEGG" id="amu:Amuc_1607"/>
<dbReference type="eggNOG" id="COG0713">
    <property type="taxonomic scope" value="Bacteria"/>
</dbReference>
<dbReference type="HOGENOM" id="CLU_144724_0_0_0"/>
<dbReference type="OrthoDB" id="9810120at2"/>
<dbReference type="BioCyc" id="AMUC349741:G1GBX-1712-MONOMER"/>
<dbReference type="Proteomes" id="UP000001031">
    <property type="component" value="Chromosome"/>
</dbReference>
<dbReference type="GO" id="GO:0030964">
    <property type="term" value="C:NADH dehydrogenase complex"/>
    <property type="evidence" value="ECO:0007669"/>
    <property type="project" value="TreeGrafter"/>
</dbReference>
<dbReference type="GO" id="GO:0005886">
    <property type="term" value="C:plasma membrane"/>
    <property type="evidence" value="ECO:0007669"/>
    <property type="project" value="UniProtKB-SubCell"/>
</dbReference>
<dbReference type="GO" id="GO:0050136">
    <property type="term" value="F:NADH:ubiquinone reductase (non-electrogenic) activity"/>
    <property type="evidence" value="ECO:0007669"/>
    <property type="project" value="UniProtKB-UniRule"/>
</dbReference>
<dbReference type="GO" id="GO:0048038">
    <property type="term" value="F:quinone binding"/>
    <property type="evidence" value="ECO:0007669"/>
    <property type="project" value="UniProtKB-KW"/>
</dbReference>
<dbReference type="GO" id="GO:0042773">
    <property type="term" value="P:ATP synthesis coupled electron transport"/>
    <property type="evidence" value="ECO:0007669"/>
    <property type="project" value="InterPro"/>
</dbReference>
<dbReference type="FunFam" id="1.10.287.3510:FF:000001">
    <property type="entry name" value="NADH-quinone oxidoreductase subunit K"/>
    <property type="match status" value="1"/>
</dbReference>
<dbReference type="Gene3D" id="1.10.287.3510">
    <property type="match status" value="1"/>
</dbReference>
<dbReference type="HAMAP" id="MF_01456">
    <property type="entry name" value="NDH1_NuoK"/>
    <property type="match status" value="1"/>
</dbReference>
<dbReference type="InterPro" id="IPR001133">
    <property type="entry name" value="NADH_UbQ_OxRdtase_chain4L/K"/>
</dbReference>
<dbReference type="InterPro" id="IPR039428">
    <property type="entry name" value="NUOK/Mnh_C1-like"/>
</dbReference>
<dbReference type="NCBIfam" id="NF004320">
    <property type="entry name" value="PRK05715.1-2"/>
    <property type="match status" value="1"/>
</dbReference>
<dbReference type="NCBIfam" id="NF004321">
    <property type="entry name" value="PRK05715.1-3"/>
    <property type="match status" value="1"/>
</dbReference>
<dbReference type="NCBIfam" id="NF004323">
    <property type="entry name" value="PRK05715.1-5"/>
    <property type="match status" value="1"/>
</dbReference>
<dbReference type="PANTHER" id="PTHR11434:SF21">
    <property type="entry name" value="NADH DEHYDROGENASE SUBUNIT 4L-RELATED"/>
    <property type="match status" value="1"/>
</dbReference>
<dbReference type="PANTHER" id="PTHR11434">
    <property type="entry name" value="NADH-UBIQUINONE OXIDOREDUCTASE SUBUNIT ND4L"/>
    <property type="match status" value="1"/>
</dbReference>
<dbReference type="Pfam" id="PF00420">
    <property type="entry name" value="Oxidored_q2"/>
    <property type="match status" value="1"/>
</dbReference>
<organism>
    <name type="scientific">Akkermansia muciniphila (strain ATCC BAA-835 / DSM 22959 / JCM 33894 / BCRC 81048 / CCUG 64013 / CIP 107961 / Muc)</name>
    <dbReference type="NCBI Taxonomy" id="349741"/>
    <lineage>
        <taxon>Bacteria</taxon>
        <taxon>Pseudomonadati</taxon>
        <taxon>Verrucomicrobiota</taxon>
        <taxon>Verrucomicrobiia</taxon>
        <taxon>Verrucomicrobiales</taxon>
        <taxon>Akkermansiaceae</taxon>
        <taxon>Akkermansia</taxon>
    </lineage>
</organism>